<organism>
    <name type="scientific">Lepidium virginicum</name>
    <name type="common">Virginia pepperweed</name>
    <dbReference type="NCBI Taxonomy" id="59292"/>
    <lineage>
        <taxon>Eukaryota</taxon>
        <taxon>Viridiplantae</taxon>
        <taxon>Streptophyta</taxon>
        <taxon>Embryophyta</taxon>
        <taxon>Tracheophyta</taxon>
        <taxon>Spermatophyta</taxon>
        <taxon>Magnoliopsida</taxon>
        <taxon>eudicotyledons</taxon>
        <taxon>Gunneridae</taxon>
        <taxon>Pentapetalae</taxon>
        <taxon>rosids</taxon>
        <taxon>malvids</taxon>
        <taxon>Brassicales</taxon>
        <taxon>Brassicaceae</taxon>
        <taxon>Lepidieae</taxon>
        <taxon>Lepidium</taxon>
    </lineage>
</organism>
<feature type="chain" id="PRO_0000294223" description="Photosystem I P700 chlorophyll a apoprotein A1">
    <location>
        <begin position="1"/>
        <end position="750"/>
    </location>
</feature>
<feature type="transmembrane region" description="Helical; Name=I" evidence="1">
    <location>
        <begin position="70"/>
        <end position="93"/>
    </location>
</feature>
<feature type="transmembrane region" description="Helical; Name=II" evidence="1">
    <location>
        <begin position="156"/>
        <end position="179"/>
    </location>
</feature>
<feature type="transmembrane region" description="Helical; Name=III" evidence="1">
    <location>
        <begin position="195"/>
        <end position="219"/>
    </location>
</feature>
<feature type="transmembrane region" description="Helical; Name=IV" evidence="1">
    <location>
        <begin position="291"/>
        <end position="309"/>
    </location>
</feature>
<feature type="transmembrane region" description="Helical; Name=V" evidence="1">
    <location>
        <begin position="346"/>
        <end position="369"/>
    </location>
</feature>
<feature type="transmembrane region" description="Helical; Name=VI" evidence="1">
    <location>
        <begin position="385"/>
        <end position="411"/>
    </location>
</feature>
<feature type="transmembrane region" description="Helical; Name=VII" evidence="1">
    <location>
        <begin position="433"/>
        <end position="455"/>
    </location>
</feature>
<feature type="transmembrane region" description="Helical; Name=VIII" evidence="1">
    <location>
        <begin position="531"/>
        <end position="549"/>
    </location>
</feature>
<feature type="transmembrane region" description="Helical; Name=IX" evidence="1">
    <location>
        <begin position="589"/>
        <end position="610"/>
    </location>
</feature>
<feature type="transmembrane region" description="Helical; Name=X" evidence="1">
    <location>
        <begin position="664"/>
        <end position="686"/>
    </location>
</feature>
<feature type="transmembrane region" description="Helical; Name=XI" evidence="1">
    <location>
        <begin position="724"/>
        <end position="744"/>
    </location>
</feature>
<feature type="binding site" evidence="1">
    <location>
        <position position="573"/>
    </location>
    <ligand>
        <name>[4Fe-4S] cluster</name>
        <dbReference type="ChEBI" id="CHEBI:49883"/>
        <note>ligand shared between dimeric partners</note>
    </ligand>
</feature>
<feature type="binding site" evidence="1">
    <location>
        <position position="582"/>
    </location>
    <ligand>
        <name>[4Fe-4S] cluster</name>
        <dbReference type="ChEBI" id="CHEBI:49883"/>
        <note>ligand shared between dimeric partners</note>
    </ligand>
</feature>
<feature type="binding site" description="axial binding residue" evidence="1">
    <location>
        <position position="675"/>
    </location>
    <ligand>
        <name>chlorophyll a'</name>
        <dbReference type="ChEBI" id="CHEBI:189419"/>
        <label>A1</label>
    </ligand>
    <ligandPart>
        <name>Mg</name>
        <dbReference type="ChEBI" id="CHEBI:25107"/>
    </ligandPart>
</feature>
<feature type="binding site" description="axial binding residue" evidence="1">
    <location>
        <position position="683"/>
    </location>
    <ligand>
        <name>chlorophyll a</name>
        <dbReference type="ChEBI" id="CHEBI:58416"/>
        <label>A3</label>
    </ligand>
    <ligandPart>
        <name>Mg</name>
        <dbReference type="ChEBI" id="CHEBI:25107"/>
    </ligandPart>
</feature>
<feature type="binding site" evidence="1">
    <location>
        <position position="691"/>
    </location>
    <ligand>
        <name>chlorophyll a</name>
        <dbReference type="ChEBI" id="CHEBI:58416"/>
        <label>A3</label>
    </ligand>
</feature>
<feature type="binding site" evidence="1">
    <location>
        <position position="692"/>
    </location>
    <ligand>
        <name>phylloquinone</name>
        <dbReference type="ChEBI" id="CHEBI:18067"/>
        <label>A</label>
    </ligand>
</feature>
<proteinExistence type="inferred from homology"/>
<name>PSAA_LEPVR</name>
<protein>
    <recommendedName>
        <fullName evidence="1">Photosystem I P700 chlorophyll a apoprotein A1</fullName>
        <ecNumber evidence="1">1.97.1.12</ecNumber>
    </recommendedName>
    <alternativeName>
        <fullName evidence="1">PSI-A</fullName>
    </alternativeName>
    <alternativeName>
        <fullName evidence="1">PsaA</fullName>
    </alternativeName>
</protein>
<reference key="1">
    <citation type="submission" date="2007-03" db="EMBL/GenBank/DDBJ databases">
        <title>Sequencing analysis of Lepidium virginicum JO26 chloroplast DNA.</title>
        <authorList>
            <person name="Hosouchi T."/>
            <person name="Tsuruoka H."/>
            <person name="Kotani H."/>
        </authorList>
    </citation>
    <scope>NUCLEOTIDE SEQUENCE [LARGE SCALE GENOMIC DNA]</scope>
</reference>
<comment type="function">
    <text>PsaA and PsaB bind P700, the primary electron donor of photosystem I (PSI), as well as the electron acceptors A0, A1 and FX. PSI is a plastocyanin-ferredoxin oxidoreductase, converting photonic excitation into a charge separation, which transfers an electron from the donor P700 chlorophyll pair to the spectroscopically characterized acceptors A0, A1, FX, FA and FB in turn. Oxidized P700 is reduced on the lumenal side of the thylakoid membrane by plastocyanin.</text>
</comment>
<comment type="catalytic activity">
    <reaction evidence="1">
        <text>reduced [plastocyanin] + hnu + oxidized [2Fe-2S]-[ferredoxin] = oxidized [plastocyanin] + reduced [2Fe-2S]-[ferredoxin]</text>
        <dbReference type="Rhea" id="RHEA:30407"/>
        <dbReference type="Rhea" id="RHEA-COMP:10000"/>
        <dbReference type="Rhea" id="RHEA-COMP:10001"/>
        <dbReference type="Rhea" id="RHEA-COMP:10039"/>
        <dbReference type="Rhea" id="RHEA-COMP:10040"/>
        <dbReference type="ChEBI" id="CHEBI:29036"/>
        <dbReference type="ChEBI" id="CHEBI:30212"/>
        <dbReference type="ChEBI" id="CHEBI:33737"/>
        <dbReference type="ChEBI" id="CHEBI:33738"/>
        <dbReference type="ChEBI" id="CHEBI:49552"/>
        <dbReference type="EC" id="1.97.1.12"/>
    </reaction>
</comment>
<comment type="cofactor">
    <text evidence="1">P700 is a chlorophyll a/chlorophyll a' dimer, A0 is one or more chlorophyll a, A1 is one or both phylloquinones and FX is a shared 4Fe-4S iron-sulfur center.</text>
</comment>
<comment type="subunit">
    <text evidence="1">The PsaA/B heterodimer binds the P700 chlorophyll special pair and subsequent electron acceptors. PSI consists of a core antenna complex that captures photons, and an electron transfer chain that converts photonic excitation into a charge separation. The eukaryotic PSI reaction center is composed of at least 11 subunits.</text>
</comment>
<comment type="subcellular location">
    <subcellularLocation>
        <location evidence="1">Plastid</location>
        <location evidence="1">Chloroplast thylakoid membrane</location>
        <topology evidence="1">Multi-pass membrane protein</topology>
    </subcellularLocation>
</comment>
<comment type="similarity">
    <text evidence="1">Belongs to the PsaA/PsaB family.</text>
</comment>
<dbReference type="EC" id="1.97.1.12" evidence="1"/>
<dbReference type="EMBL" id="AP009374">
    <property type="protein sequence ID" value="BAF50461.1"/>
    <property type="molecule type" value="Genomic_DNA"/>
</dbReference>
<dbReference type="RefSeq" id="YP_001123637.1">
    <property type="nucleotide sequence ID" value="NC_009273.1"/>
</dbReference>
<dbReference type="SMR" id="A4QLA6"/>
<dbReference type="GeneID" id="4961978"/>
<dbReference type="GO" id="GO:0009535">
    <property type="term" value="C:chloroplast thylakoid membrane"/>
    <property type="evidence" value="ECO:0007669"/>
    <property type="project" value="UniProtKB-SubCell"/>
</dbReference>
<dbReference type="GO" id="GO:0009522">
    <property type="term" value="C:photosystem I"/>
    <property type="evidence" value="ECO:0007669"/>
    <property type="project" value="UniProtKB-KW"/>
</dbReference>
<dbReference type="GO" id="GO:0051539">
    <property type="term" value="F:4 iron, 4 sulfur cluster binding"/>
    <property type="evidence" value="ECO:0007669"/>
    <property type="project" value="UniProtKB-KW"/>
</dbReference>
<dbReference type="GO" id="GO:0016168">
    <property type="term" value="F:chlorophyll binding"/>
    <property type="evidence" value="ECO:0007669"/>
    <property type="project" value="UniProtKB-KW"/>
</dbReference>
<dbReference type="GO" id="GO:0009055">
    <property type="term" value="F:electron transfer activity"/>
    <property type="evidence" value="ECO:0007669"/>
    <property type="project" value="UniProtKB-UniRule"/>
</dbReference>
<dbReference type="GO" id="GO:0000287">
    <property type="term" value="F:magnesium ion binding"/>
    <property type="evidence" value="ECO:0007669"/>
    <property type="project" value="UniProtKB-UniRule"/>
</dbReference>
<dbReference type="GO" id="GO:0016491">
    <property type="term" value="F:oxidoreductase activity"/>
    <property type="evidence" value="ECO:0007669"/>
    <property type="project" value="UniProtKB-KW"/>
</dbReference>
<dbReference type="GO" id="GO:0015979">
    <property type="term" value="P:photosynthesis"/>
    <property type="evidence" value="ECO:0007669"/>
    <property type="project" value="UniProtKB-UniRule"/>
</dbReference>
<dbReference type="FunFam" id="1.20.1130.10:FF:000001">
    <property type="entry name" value="Photosystem I P700 chlorophyll a apoprotein A2"/>
    <property type="match status" value="1"/>
</dbReference>
<dbReference type="Gene3D" id="1.20.1130.10">
    <property type="entry name" value="Photosystem I PsaA/PsaB"/>
    <property type="match status" value="1"/>
</dbReference>
<dbReference type="HAMAP" id="MF_00458">
    <property type="entry name" value="PSI_PsaA"/>
    <property type="match status" value="1"/>
</dbReference>
<dbReference type="InterPro" id="IPR006243">
    <property type="entry name" value="PSI_PsaA"/>
</dbReference>
<dbReference type="InterPro" id="IPR001280">
    <property type="entry name" value="PSI_PsaA/B"/>
</dbReference>
<dbReference type="InterPro" id="IPR020586">
    <property type="entry name" value="PSI_PsaA/B_CS"/>
</dbReference>
<dbReference type="InterPro" id="IPR036408">
    <property type="entry name" value="PSI_PsaA/B_sf"/>
</dbReference>
<dbReference type="NCBIfam" id="TIGR01335">
    <property type="entry name" value="psaA"/>
    <property type="match status" value="1"/>
</dbReference>
<dbReference type="PANTHER" id="PTHR30128">
    <property type="entry name" value="OUTER MEMBRANE PROTEIN, OMPA-RELATED"/>
    <property type="match status" value="1"/>
</dbReference>
<dbReference type="PANTHER" id="PTHR30128:SF19">
    <property type="entry name" value="PHOTOSYSTEM I P700 CHLOROPHYLL A APOPROTEIN A1-RELATED"/>
    <property type="match status" value="1"/>
</dbReference>
<dbReference type="Pfam" id="PF00223">
    <property type="entry name" value="PsaA_PsaB"/>
    <property type="match status" value="1"/>
</dbReference>
<dbReference type="PIRSF" id="PIRSF002905">
    <property type="entry name" value="PSI_A"/>
    <property type="match status" value="1"/>
</dbReference>
<dbReference type="PRINTS" id="PR00257">
    <property type="entry name" value="PHOTSYSPSAAB"/>
</dbReference>
<dbReference type="SUPFAM" id="SSF81558">
    <property type="entry name" value="Photosystem I subunits PsaA/PsaB"/>
    <property type="match status" value="1"/>
</dbReference>
<dbReference type="PROSITE" id="PS00419">
    <property type="entry name" value="PHOTOSYSTEM_I_PSAAB"/>
    <property type="match status" value="1"/>
</dbReference>
<gene>
    <name evidence="1" type="primary">psaA</name>
</gene>
<accession>A4QLA6</accession>
<evidence type="ECO:0000255" key="1">
    <source>
        <dbReference type="HAMAP-Rule" id="MF_00458"/>
    </source>
</evidence>
<geneLocation type="chloroplast"/>
<sequence>MIIRSPEPEVKILVDRDPIKTSFEEWAKPGHFSRTIAKGPDTTTWIWNLHADAHDFDSHTSDLEEISRKVFSAHFGQLSIIFLWLSGMYFHGARFSNYEAWLSDPTHIGPSAQVVWPIVGQEILNGDVGGGFRGIQITSGFFQLWRASGITSELQLYCTAIGALVFSALMLFAGWFHYHKAAPKLAWFQDVESMLNHHLAGLLGLGSLSWAGHQVHVSLPINQFLNAGVDPKEIPLPHEFILNRDLLAQLYPSFAEGATPFFTLNWSKYSEFLTFRGGLDPVTGGLWLTDIAHHHLAIAILFLIAGHMYRTNWGIGHGIKDILEAHKGPFTGQGHKGLYEILTTSWHAQLSLNLAMLGSLTIVVAHHMYSMPPYPYLATDYATQLSLFTHHMWIGGFLIVGAAAHAAIFMVRDYDPTNRYNDLLDRVLRHRDAIISHLNWVCIFLGFHSFGLYIHNDTMSALGRPQDMFSDTAIQLQPVFAQWIQNTHALAPGVTAPGETASTSLTWGGGELVAVGGKVALLPIPLGTADFLVHHIHAFTIHVTVLILLKGVLFARSSRLIPDKANLGFRFPCDGPGRGGTCQVSAWDHVFLGLFWMYNAISVVIFHFSWKMQSDVWGSISDQGVVTHITGGNFAQSSITINGWLRDFLWAQASQVIQSYGSSLSAYGLFFLGAHFVWAFSLMFLFSGRGYWQELIESIVWAHNKLKVAPATQPRALSIVQGRAVGVTHYLLGGIATTWAFFLARIIAVG</sequence>
<keyword id="KW-0004">4Fe-4S</keyword>
<keyword id="KW-0148">Chlorophyll</keyword>
<keyword id="KW-0150">Chloroplast</keyword>
<keyword id="KW-0157">Chromophore</keyword>
<keyword id="KW-0249">Electron transport</keyword>
<keyword id="KW-0408">Iron</keyword>
<keyword id="KW-0411">Iron-sulfur</keyword>
<keyword id="KW-0460">Magnesium</keyword>
<keyword id="KW-0472">Membrane</keyword>
<keyword id="KW-0479">Metal-binding</keyword>
<keyword id="KW-0560">Oxidoreductase</keyword>
<keyword id="KW-0602">Photosynthesis</keyword>
<keyword id="KW-0603">Photosystem I</keyword>
<keyword id="KW-0934">Plastid</keyword>
<keyword id="KW-0793">Thylakoid</keyword>
<keyword id="KW-0812">Transmembrane</keyword>
<keyword id="KW-1133">Transmembrane helix</keyword>
<keyword id="KW-0813">Transport</keyword>